<organism>
    <name type="scientific">Arabidopsis thaliana</name>
    <name type="common">Mouse-ear cress</name>
    <dbReference type="NCBI Taxonomy" id="3702"/>
    <lineage>
        <taxon>Eukaryota</taxon>
        <taxon>Viridiplantae</taxon>
        <taxon>Streptophyta</taxon>
        <taxon>Embryophyta</taxon>
        <taxon>Tracheophyta</taxon>
        <taxon>Spermatophyta</taxon>
        <taxon>Magnoliopsida</taxon>
        <taxon>eudicotyledons</taxon>
        <taxon>Gunneridae</taxon>
        <taxon>Pentapetalae</taxon>
        <taxon>rosids</taxon>
        <taxon>malvids</taxon>
        <taxon>Brassicales</taxon>
        <taxon>Brassicaceae</taxon>
        <taxon>Camelineae</taxon>
        <taxon>Arabidopsis</taxon>
    </lineage>
</organism>
<reference key="1">
    <citation type="journal article" date="2000" name="DNA Res.">
        <title>Structural analysis of Arabidopsis thaliana chromosome 5. X. Sequence features of the regions of 3,076,755 bp covered by sixty P1 and TAC clones.</title>
        <authorList>
            <person name="Sato S."/>
            <person name="Nakamura Y."/>
            <person name="Kaneko T."/>
            <person name="Katoh T."/>
            <person name="Asamizu E."/>
            <person name="Kotani H."/>
            <person name="Tabata S."/>
        </authorList>
    </citation>
    <scope>NUCLEOTIDE SEQUENCE [LARGE SCALE GENOMIC DNA]</scope>
    <source>
        <strain>cv. Columbia</strain>
    </source>
</reference>
<reference key="2">
    <citation type="journal article" date="2000" name="Nature">
        <title>Sequence and analysis of chromosome 5 of the plant Arabidopsis thaliana.</title>
        <authorList>
            <person name="Tabata S."/>
            <person name="Kaneko T."/>
            <person name="Nakamura Y."/>
            <person name="Kotani H."/>
            <person name="Kato T."/>
            <person name="Asamizu E."/>
            <person name="Miyajima N."/>
            <person name="Sasamoto S."/>
            <person name="Kimura T."/>
            <person name="Hosouchi T."/>
            <person name="Kawashima K."/>
            <person name="Kohara M."/>
            <person name="Matsumoto M."/>
            <person name="Matsuno A."/>
            <person name="Muraki A."/>
            <person name="Nakayama S."/>
            <person name="Nakazaki N."/>
            <person name="Naruo K."/>
            <person name="Okumura S."/>
            <person name="Shinpo S."/>
            <person name="Takeuchi C."/>
            <person name="Wada T."/>
            <person name="Watanabe A."/>
            <person name="Yamada M."/>
            <person name="Yasuda M."/>
            <person name="Sato S."/>
            <person name="de la Bastide M."/>
            <person name="Huang E."/>
            <person name="Spiegel L."/>
            <person name="Gnoj L."/>
            <person name="O'Shaughnessy A."/>
            <person name="Preston R."/>
            <person name="Habermann K."/>
            <person name="Murray J."/>
            <person name="Johnson D."/>
            <person name="Rohlfing T."/>
            <person name="Nelson J."/>
            <person name="Stoneking T."/>
            <person name="Pepin K."/>
            <person name="Spieth J."/>
            <person name="Sekhon M."/>
            <person name="Armstrong J."/>
            <person name="Becker M."/>
            <person name="Belter E."/>
            <person name="Cordum H."/>
            <person name="Cordes M."/>
            <person name="Courtney L."/>
            <person name="Courtney W."/>
            <person name="Dante M."/>
            <person name="Du H."/>
            <person name="Edwards J."/>
            <person name="Fryman J."/>
            <person name="Haakensen B."/>
            <person name="Lamar E."/>
            <person name="Latreille P."/>
            <person name="Leonard S."/>
            <person name="Meyer R."/>
            <person name="Mulvaney E."/>
            <person name="Ozersky P."/>
            <person name="Riley A."/>
            <person name="Strowmatt C."/>
            <person name="Wagner-McPherson C."/>
            <person name="Wollam A."/>
            <person name="Yoakum M."/>
            <person name="Bell M."/>
            <person name="Dedhia N."/>
            <person name="Parnell L."/>
            <person name="Shah R."/>
            <person name="Rodriguez M."/>
            <person name="Hoon See L."/>
            <person name="Vil D."/>
            <person name="Baker J."/>
            <person name="Kirchoff K."/>
            <person name="Toth K."/>
            <person name="King L."/>
            <person name="Bahret A."/>
            <person name="Miller B."/>
            <person name="Marra M.A."/>
            <person name="Martienssen R."/>
            <person name="McCombie W.R."/>
            <person name="Wilson R.K."/>
            <person name="Murphy G."/>
            <person name="Bancroft I."/>
            <person name="Volckaert G."/>
            <person name="Wambutt R."/>
            <person name="Duesterhoeft A."/>
            <person name="Stiekema W."/>
            <person name="Pohl T."/>
            <person name="Entian K.-D."/>
            <person name="Terryn N."/>
            <person name="Hartley N."/>
            <person name="Bent E."/>
            <person name="Johnson S."/>
            <person name="Langham S.-A."/>
            <person name="McCullagh B."/>
            <person name="Robben J."/>
            <person name="Grymonprez B."/>
            <person name="Zimmermann W."/>
            <person name="Ramsperger U."/>
            <person name="Wedler H."/>
            <person name="Balke K."/>
            <person name="Wedler E."/>
            <person name="Peters S."/>
            <person name="van Staveren M."/>
            <person name="Dirkse W."/>
            <person name="Mooijman P."/>
            <person name="Klein Lankhorst R."/>
            <person name="Weitzenegger T."/>
            <person name="Bothe G."/>
            <person name="Rose M."/>
            <person name="Hauf J."/>
            <person name="Berneiser S."/>
            <person name="Hempel S."/>
            <person name="Feldpausch M."/>
            <person name="Lamberth S."/>
            <person name="Villarroel R."/>
            <person name="Gielen J."/>
            <person name="Ardiles W."/>
            <person name="Bents O."/>
            <person name="Lemcke K."/>
            <person name="Kolesov G."/>
            <person name="Mayer K.F.X."/>
            <person name="Rudd S."/>
            <person name="Schoof H."/>
            <person name="Schueller C."/>
            <person name="Zaccaria P."/>
            <person name="Mewes H.-W."/>
            <person name="Bevan M."/>
            <person name="Fransz P.F."/>
        </authorList>
    </citation>
    <scope>NUCLEOTIDE SEQUENCE [LARGE SCALE GENOMIC DNA]</scope>
    <source>
        <strain>cv. Columbia</strain>
    </source>
</reference>
<reference key="3">
    <citation type="journal article" date="2017" name="Plant J.">
        <title>Araport11: a complete reannotation of the Arabidopsis thaliana reference genome.</title>
        <authorList>
            <person name="Cheng C.Y."/>
            <person name="Krishnakumar V."/>
            <person name="Chan A.P."/>
            <person name="Thibaud-Nissen F."/>
            <person name="Schobel S."/>
            <person name="Town C.D."/>
        </authorList>
    </citation>
    <scope>GENOME REANNOTATION</scope>
    <source>
        <strain>cv. Columbia</strain>
    </source>
</reference>
<reference key="4">
    <citation type="journal article" date="2004" name="Plant Cell">
        <title>Genome-wide analysis of Arabidopsis pentatricopeptide repeat proteins reveals their essential role in organelle biogenesis.</title>
        <authorList>
            <person name="Lurin C."/>
            <person name="Andres C."/>
            <person name="Aubourg S."/>
            <person name="Bellaoui M."/>
            <person name="Bitton F."/>
            <person name="Bruyere C."/>
            <person name="Caboche M."/>
            <person name="Debast C."/>
            <person name="Gualberto J."/>
            <person name="Hoffmann B."/>
            <person name="Lecharny A."/>
            <person name="Le Ret M."/>
            <person name="Martin-Magniette M.-L."/>
            <person name="Mireau H."/>
            <person name="Peeters N."/>
            <person name="Renou J.-P."/>
            <person name="Szurek B."/>
            <person name="Taconnat L."/>
            <person name="Small I."/>
        </authorList>
    </citation>
    <scope>GENE FAMILY</scope>
</reference>
<evidence type="ECO:0000256" key="1">
    <source>
        <dbReference type="SAM" id="MobiDB-lite"/>
    </source>
</evidence>
<evidence type="ECO:0000305" key="2"/>
<proteinExistence type="inferred from homology"/>
<accession>Q9FH87</accession>
<accession>O49535</accession>
<dbReference type="EMBL" id="AB020743">
    <property type="protein sequence ID" value="BAB09050.1"/>
    <property type="molecule type" value="Genomic_DNA"/>
</dbReference>
<dbReference type="EMBL" id="AL021684">
    <property type="protein sequence ID" value="CAA16678.1"/>
    <property type="status" value="ALT_SEQ"/>
    <property type="molecule type" value="Genomic_DNA"/>
</dbReference>
<dbReference type="EMBL" id="CP002688">
    <property type="protein sequence ID" value="AED98111.1"/>
    <property type="molecule type" value="Genomic_DNA"/>
</dbReference>
<dbReference type="PIR" id="T05888">
    <property type="entry name" value="T05888"/>
</dbReference>
<dbReference type="RefSeq" id="NP_201383.1">
    <property type="nucleotide sequence ID" value="NM_125979.1"/>
</dbReference>
<dbReference type="SMR" id="Q9FH87"/>
<dbReference type="FunCoup" id="Q9FH87">
    <property type="interactions" value="670"/>
</dbReference>
<dbReference type="PaxDb" id="3702-AT5G65820.1"/>
<dbReference type="ProteomicsDB" id="249328"/>
<dbReference type="EnsemblPlants" id="AT5G65820.1">
    <property type="protein sequence ID" value="AT5G65820.1"/>
    <property type="gene ID" value="AT5G65820"/>
</dbReference>
<dbReference type="GeneID" id="836711"/>
<dbReference type="Gramene" id="AT5G65820.1">
    <property type="protein sequence ID" value="AT5G65820.1"/>
    <property type="gene ID" value="AT5G65820"/>
</dbReference>
<dbReference type="KEGG" id="ath:AT5G65820"/>
<dbReference type="Araport" id="AT5G65820"/>
<dbReference type="TAIR" id="AT5G65820"/>
<dbReference type="eggNOG" id="KOG4197">
    <property type="taxonomic scope" value="Eukaryota"/>
</dbReference>
<dbReference type="HOGENOM" id="CLU_002706_49_20_1"/>
<dbReference type="InParanoid" id="Q9FH87"/>
<dbReference type="OMA" id="MINIMGR"/>
<dbReference type="PhylomeDB" id="Q9FH87"/>
<dbReference type="PRO" id="PR:Q9FH87"/>
<dbReference type="Proteomes" id="UP000006548">
    <property type="component" value="Chromosome 5"/>
</dbReference>
<dbReference type="ExpressionAtlas" id="Q9FH87">
    <property type="expression patterns" value="baseline and differential"/>
</dbReference>
<dbReference type="Gene3D" id="1.25.40.10">
    <property type="entry name" value="Tetratricopeptide repeat domain"/>
    <property type="match status" value="5"/>
</dbReference>
<dbReference type="InterPro" id="IPR002885">
    <property type="entry name" value="Pentatricopeptide_rpt"/>
</dbReference>
<dbReference type="InterPro" id="IPR011990">
    <property type="entry name" value="TPR-like_helical_dom_sf"/>
</dbReference>
<dbReference type="NCBIfam" id="TIGR00756">
    <property type="entry name" value="PPR"/>
    <property type="match status" value="7"/>
</dbReference>
<dbReference type="PANTHER" id="PTHR47931">
    <property type="entry name" value="OS01G0228400 PROTEIN"/>
    <property type="match status" value="1"/>
</dbReference>
<dbReference type="PANTHER" id="PTHR47931:SF2">
    <property type="entry name" value="OS01G0228400 PROTEIN"/>
    <property type="match status" value="1"/>
</dbReference>
<dbReference type="Pfam" id="PF01535">
    <property type="entry name" value="PPR"/>
    <property type="match status" value="3"/>
</dbReference>
<dbReference type="Pfam" id="PF12854">
    <property type="entry name" value="PPR_1"/>
    <property type="match status" value="1"/>
</dbReference>
<dbReference type="Pfam" id="PF13041">
    <property type="entry name" value="PPR_2"/>
    <property type="match status" value="3"/>
</dbReference>
<dbReference type="SUPFAM" id="SSF48452">
    <property type="entry name" value="TPR-like"/>
    <property type="match status" value="1"/>
</dbReference>
<dbReference type="PROSITE" id="PS51375">
    <property type="entry name" value="PPR"/>
    <property type="match status" value="11"/>
</dbReference>
<feature type="chain" id="PRO_0000363584" description="Putative pentatricopeptide repeat-containing protein At5g65820">
    <location>
        <begin position="1"/>
        <end position="637"/>
    </location>
</feature>
<feature type="repeat" description="PPR 1">
    <location>
        <begin position="146"/>
        <end position="180"/>
    </location>
</feature>
<feature type="repeat" description="PPR 2">
    <location>
        <begin position="182"/>
        <end position="216"/>
    </location>
</feature>
<feature type="repeat" description="PPR 3">
    <location>
        <begin position="217"/>
        <end position="247"/>
    </location>
</feature>
<feature type="repeat" description="PPR 4">
    <location>
        <begin position="251"/>
        <end position="285"/>
    </location>
</feature>
<feature type="repeat" description="PPR 5">
    <location>
        <begin position="286"/>
        <end position="320"/>
    </location>
</feature>
<feature type="repeat" description="PPR 6">
    <location>
        <begin position="321"/>
        <end position="355"/>
    </location>
</feature>
<feature type="repeat" description="PPR 7">
    <location>
        <begin position="356"/>
        <end position="390"/>
    </location>
</feature>
<feature type="repeat" description="PPR 8">
    <location>
        <begin position="391"/>
        <end position="425"/>
    </location>
</feature>
<feature type="repeat" description="PPR 9">
    <location>
        <begin position="426"/>
        <end position="460"/>
    </location>
</feature>
<feature type="repeat" description="PPR 10">
    <location>
        <begin position="461"/>
        <end position="495"/>
    </location>
</feature>
<feature type="repeat" description="PPR 11">
    <location>
        <begin position="498"/>
        <end position="532"/>
    </location>
</feature>
<feature type="repeat" description="PPR 12">
    <location>
        <begin position="534"/>
        <end position="568"/>
    </location>
</feature>
<feature type="region of interest" description="Disordered" evidence="1">
    <location>
        <begin position="616"/>
        <end position="637"/>
    </location>
</feature>
<feature type="compositionally biased region" description="Basic and acidic residues" evidence="1">
    <location>
        <begin position="616"/>
        <end position="630"/>
    </location>
</feature>
<comment type="similarity">
    <text evidence="2">Belongs to the PPR family. P subfamily.</text>
</comment>
<comment type="sequence caution" evidence="2">
    <conflict type="erroneous gene model prediction">
        <sequence resource="EMBL-CDS" id="CAA16678"/>
    </conflict>
</comment>
<comment type="online information" name="Pentatricopeptide repeat proteins">
    <link uri="https://ppr.plantenergy.uwa.edu.au"/>
</comment>
<sequence>MLPFTREMHRFSPIVEFLLSKRQIFLHYSQFKSRFDLIHRSFHVSRALEDNFRRSNGIGLVCLEKSHNDRTKNSKYDEFASDVEKSYRILRKFHSRVPKLELALNESGVELRPGLIERVLNRCGDAGNLGYRFFVWAAKQPRYCHSIEVYKSMVKILSKMRQFGAVWGLIEEMRKENPQLIEPELFVVLVQRFASADMVKKAIEVLDEMPKFGFEPDEYVFGCLLDALCKHGSVKDAAKLFEDMRMRFPVNLRYFTSLLYGWCRVGKMMEAKYVLVQMNEAGFEPDIVDYTNLLSGYANAGKMADAYDLLRDMRRRGFEPNANCYTVLIQALCKVDRMEEAMKVFVEMERYECEADVVTYTALVSGFCKWGKIDKCYIVLDDMIKKGLMPSELTYMHIMVAHEKKESFEECLELMEKMRQIEYHPDIGIYNVVIRLACKLGEVKEAVRLWNEMEENGLSPGVDTFVIMINGLASQGCLLEASDHFKEMVTRGLFSVSQYGTLKLLLNTVLKDKKLEMAKDVWSCITSKGACELNVLSWTIWIHALFSKGYEKEACSYCIEMIEMDFMPQPDTFAKLMKGLKKLYNREFAGEITEKVRNMAAEREMSFKMYKRRGVQDLTEKAKSKQDREGKKKQRSR</sequence>
<protein>
    <recommendedName>
        <fullName>Putative pentatricopeptide repeat-containing protein At5g65820</fullName>
    </recommendedName>
</protein>
<name>PP447_ARATH</name>
<keyword id="KW-1185">Reference proteome</keyword>
<keyword id="KW-0677">Repeat</keyword>
<gene>
    <name type="ordered locus">At5g65820</name>
    <name type="ORF">K22J17.3</name>
</gene>